<accession>A9IYN9</accession>
<comment type="function">
    <text evidence="1">Involved in peptide bond synthesis. Stimulates efficient translation and peptide-bond synthesis on native or reconstituted 70S ribosomes in vitro. Probably functions indirectly by altering the affinity of the ribosome for aminoacyl-tRNA, thus increasing their reactivity as acceptors for peptidyl transferase.</text>
</comment>
<comment type="pathway">
    <text evidence="1">Protein biosynthesis; polypeptide chain elongation.</text>
</comment>
<comment type="subcellular location">
    <subcellularLocation>
        <location evidence="1">Cytoplasm</location>
    </subcellularLocation>
</comment>
<comment type="similarity">
    <text evidence="1">Belongs to the elongation factor P family.</text>
</comment>
<sequence>MKINGNEIRPGNVIEHQGSLWVAVKCNAVKPGKGGAFNQVELKNLLDGTKLNERFRAAETVERVRLEQKDFTFLYQQGDALVFMDSESYEQLELQKDFVGERAAFLQDGMTVTVELYQEKPIGISLPDQVAVTIVEADPALKGQTVTSSYKPAILENGIRILVPPFMNAGERIIVDTNELIYLRRANEKDK</sequence>
<protein>
    <recommendedName>
        <fullName evidence="1">Elongation factor P</fullName>
        <shortName evidence="1">EF-P</shortName>
    </recommendedName>
</protein>
<dbReference type="EMBL" id="AM260525">
    <property type="protein sequence ID" value="CAK02398.1"/>
    <property type="molecule type" value="Genomic_DNA"/>
</dbReference>
<dbReference type="RefSeq" id="WP_012232455.1">
    <property type="nucleotide sequence ID" value="NC_010161.1"/>
</dbReference>
<dbReference type="SMR" id="A9IYN9"/>
<dbReference type="KEGG" id="btr:BT_2402"/>
<dbReference type="eggNOG" id="COG0231">
    <property type="taxonomic scope" value="Bacteria"/>
</dbReference>
<dbReference type="HOGENOM" id="CLU_074944_1_1_5"/>
<dbReference type="UniPathway" id="UPA00345"/>
<dbReference type="Proteomes" id="UP000001592">
    <property type="component" value="Chromosome"/>
</dbReference>
<dbReference type="GO" id="GO:0005737">
    <property type="term" value="C:cytoplasm"/>
    <property type="evidence" value="ECO:0007669"/>
    <property type="project" value="UniProtKB-SubCell"/>
</dbReference>
<dbReference type="GO" id="GO:0003746">
    <property type="term" value="F:translation elongation factor activity"/>
    <property type="evidence" value="ECO:0007669"/>
    <property type="project" value="UniProtKB-UniRule"/>
</dbReference>
<dbReference type="GO" id="GO:0043043">
    <property type="term" value="P:peptide biosynthetic process"/>
    <property type="evidence" value="ECO:0007669"/>
    <property type="project" value="InterPro"/>
</dbReference>
<dbReference type="CDD" id="cd04470">
    <property type="entry name" value="S1_EF-P_repeat_1"/>
    <property type="match status" value="1"/>
</dbReference>
<dbReference type="CDD" id="cd05794">
    <property type="entry name" value="S1_EF-P_repeat_2"/>
    <property type="match status" value="1"/>
</dbReference>
<dbReference type="FunFam" id="2.30.30.30:FF:000003">
    <property type="entry name" value="Elongation factor P"/>
    <property type="match status" value="1"/>
</dbReference>
<dbReference type="FunFam" id="2.40.50.140:FF:000004">
    <property type="entry name" value="Elongation factor P"/>
    <property type="match status" value="1"/>
</dbReference>
<dbReference type="FunFam" id="2.40.50.140:FF:000009">
    <property type="entry name" value="Elongation factor P"/>
    <property type="match status" value="1"/>
</dbReference>
<dbReference type="Gene3D" id="2.30.30.30">
    <property type="match status" value="1"/>
</dbReference>
<dbReference type="Gene3D" id="2.40.50.140">
    <property type="entry name" value="Nucleic acid-binding proteins"/>
    <property type="match status" value="2"/>
</dbReference>
<dbReference type="HAMAP" id="MF_00141">
    <property type="entry name" value="EF_P"/>
    <property type="match status" value="1"/>
</dbReference>
<dbReference type="InterPro" id="IPR015365">
    <property type="entry name" value="Elong-fact-P_C"/>
</dbReference>
<dbReference type="InterPro" id="IPR012340">
    <property type="entry name" value="NA-bd_OB-fold"/>
</dbReference>
<dbReference type="InterPro" id="IPR014722">
    <property type="entry name" value="Rib_uL2_dom2"/>
</dbReference>
<dbReference type="InterPro" id="IPR020599">
    <property type="entry name" value="Transl_elong_fac_P/YeiP"/>
</dbReference>
<dbReference type="InterPro" id="IPR013185">
    <property type="entry name" value="Transl_elong_KOW-like"/>
</dbReference>
<dbReference type="InterPro" id="IPR001059">
    <property type="entry name" value="Transl_elong_P/YeiP_cen"/>
</dbReference>
<dbReference type="InterPro" id="IPR011768">
    <property type="entry name" value="Transl_elongation_fac_P"/>
</dbReference>
<dbReference type="InterPro" id="IPR008991">
    <property type="entry name" value="Translation_prot_SH3-like_sf"/>
</dbReference>
<dbReference type="NCBIfam" id="TIGR00038">
    <property type="entry name" value="efp"/>
    <property type="match status" value="1"/>
</dbReference>
<dbReference type="NCBIfam" id="NF001810">
    <property type="entry name" value="PRK00529.1"/>
    <property type="match status" value="1"/>
</dbReference>
<dbReference type="PANTHER" id="PTHR30053">
    <property type="entry name" value="ELONGATION FACTOR P"/>
    <property type="match status" value="1"/>
</dbReference>
<dbReference type="PANTHER" id="PTHR30053:SF14">
    <property type="entry name" value="TRANSLATION ELONGATION FACTOR KOW-LIKE DOMAIN-CONTAINING PROTEIN"/>
    <property type="match status" value="1"/>
</dbReference>
<dbReference type="Pfam" id="PF01132">
    <property type="entry name" value="EFP"/>
    <property type="match status" value="1"/>
</dbReference>
<dbReference type="Pfam" id="PF08207">
    <property type="entry name" value="EFP_N"/>
    <property type="match status" value="1"/>
</dbReference>
<dbReference type="Pfam" id="PF09285">
    <property type="entry name" value="Elong-fact-P_C"/>
    <property type="match status" value="1"/>
</dbReference>
<dbReference type="PIRSF" id="PIRSF005901">
    <property type="entry name" value="EF-P"/>
    <property type="match status" value="1"/>
</dbReference>
<dbReference type="SMART" id="SM01185">
    <property type="entry name" value="EFP"/>
    <property type="match status" value="1"/>
</dbReference>
<dbReference type="SMART" id="SM00841">
    <property type="entry name" value="Elong-fact-P_C"/>
    <property type="match status" value="1"/>
</dbReference>
<dbReference type="SUPFAM" id="SSF50249">
    <property type="entry name" value="Nucleic acid-binding proteins"/>
    <property type="match status" value="2"/>
</dbReference>
<dbReference type="SUPFAM" id="SSF50104">
    <property type="entry name" value="Translation proteins SH3-like domain"/>
    <property type="match status" value="1"/>
</dbReference>
<organism>
    <name type="scientific">Bartonella tribocorum (strain CIP 105476 / IBS 506)</name>
    <dbReference type="NCBI Taxonomy" id="382640"/>
    <lineage>
        <taxon>Bacteria</taxon>
        <taxon>Pseudomonadati</taxon>
        <taxon>Pseudomonadota</taxon>
        <taxon>Alphaproteobacteria</taxon>
        <taxon>Hyphomicrobiales</taxon>
        <taxon>Bartonellaceae</taxon>
        <taxon>Bartonella</taxon>
    </lineage>
</organism>
<name>EFP_BART1</name>
<keyword id="KW-0963">Cytoplasm</keyword>
<keyword id="KW-0251">Elongation factor</keyword>
<keyword id="KW-0648">Protein biosynthesis</keyword>
<feature type="chain" id="PRO_1000076503" description="Elongation factor P">
    <location>
        <begin position="1"/>
        <end position="191"/>
    </location>
</feature>
<reference key="1">
    <citation type="journal article" date="2007" name="Nat. Genet.">
        <title>Genomic analysis of Bartonella identifies type IV secretion systems as host adaptability factors.</title>
        <authorList>
            <person name="Saenz H.L."/>
            <person name="Engel P."/>
            <person name="Stoeckli M.C."/>
            <person name="Lanz C."/>
            <person name="Raddatz G."/>
            <person name="Vayssier-Taussat M."/>
            <person name="Birtles R."/>
            <person name="Schuster S.C."/>
            <person name="Dehio C."/>
        </authorList>
    </citation>
    <scope>NUCLEOTIDE SEQUENCE [LARGE SCALE GENOMIC DNA]</scope>
    <source>
        <strain>CIP 105476 / IBS 506</strain>
    </source>
</reference>
<gene>
    <name evidence="1" type="primary">efp</name>
    <name type="ordered locus">BT_2402</name>
</gene>
<proteinExistence type="inferred from homology"/>
<evidence type="ECO:0000255" key="1">
    <source>
        <dbReference type="HAMAP-Rule" id="MF_00141"/>
    </source>
</evidence>